<organism>
    <name type="scientific">Lotus japonicus</name>
    <name type="common">Lotus corniculatus var. japonicus</name>
    <dbReference type="NCBI Taxonomy" id="34305"/>
    <lineage>
        <taxon>Eukaryota</taxon>
        <taxon>Viridiplantae</taxon>
        <taxon>Streptophyta</taxon>
        <taxon>Embryophyta</taxon>
        <taxon>Tracheophyta</taxon>
        <taxon>Spermatophyta</taxon>
        <taxon>Magnoliopsida</taxon>
        <taxon>eudicotyledons</taxon>
        <taxon>Gunneridae</taxon>
        <taxon>Pentapetalae</taxon>
        <taxon>rosids</taxon>
        <taxon>fabids</taxon>
        <taxon>Fabales</taxon>
        <taxon>Fabaceae</taxon>
        <taxon>Papilionoideae</taxon>
        <taxon>50 kb inversion clade</taxon>
        <taxon>NPAAA clade</taxon>
        <taxon>Hologalegina</taxon>
        <taxon>robinioid clade</taxon>
        <taxon>Loteae</taxon>
        <taxon>Lotus</taxon>
    </lineage>
</organism>
<reference key="1">
    <citation type="journal article" date="2000" name="DNA Res.">
        <title>Complete structure of the chloroplast genome of a legume, Lotus japonicus.</title>
        <authorList>
            <person name="Kato T."/>
            <person name="Kaneko T."/>
            <person name="Sato S."/>
            <person name="Nakamura Y."/>
            <person name="Tabata S."/>
        </authorList>
    </citation>
    <scope>NUCLEOTIDE SEQUENCE [LARGE SCALE GENOMIC DNA]</scope>
    <source>
        <strain>cv. Miyakojima MG-20</strain>
    </source>
</reference>
<geneLocation type="chloroplast"/>
<feature type="chain" id="PRO_0000062288" description="Large ribosomal subunit protein uL16c">
    <location>
        <begin position="1"/>
        <end position="135"/>
    </location>
</feature>
<comment type="subunit">
    <text evidence="1">Part of the 50S ribosomal subunit.</text>
</comment>
<comment type="subcellular location">
    <subcellularLocation>
        <location>Plastid</location>
        <location>Chloroplast</location>
    </subcellularLocation>
</comment>
<comment type="similarity">
    <text evidence="1">Belongs to the universal ribosomal protein uL16 family.</text>
</comment>
<dbReference type="EMBL" id="AP002983">
    <property type="protein sequence ID" value="BAB33233.1"/>
    <property type="molecule type" value="Genomic_DNA"/>
</dbReference>
<dbReference type="RefSeq" id="NP_084834.1">
    <property type="nucleotide sequence ID" value="NC_002694.1"/>
</dbReference>
<dbReference type="SMR" id="Q9BBP9"/>
<dbReference type="GeneID" id="802955"/>
<dbReference type="GO" id="GO:0009507">
    <property type="term" value="C:chloroplast"/>
    <property type="evidence" value="ECO:0007669"/>
    <property type="project" value="UniProtKB-SubCell"/>
</dbReference>
<dbReference type="GO" id="GO:0005762">
    <property type="term" value="C:mitochondrial large ribosomal subunit"/>
    <property type="evidence" value="ECO:0007669"/>
    <property type="project" value="TreeGrafter"/>
</dbReference>
<dbReference type="GO" id="GO:0019843">
    <property type="term" value="F:rRNA binding"/>
    <property type="evidence" value="ECO:0007669"/>
    <property type="project" value="InterPro"/>
</dbReference>
<dbReference type="GO" id="GO:0003735">
    <property type="term" value="F:structural constituent of ribosome"/>
    <property type="evidence" value="ECO:0007669"/>
    <property type="project" value="InterPro"/>
</dbReference>
<dbReference type="GO" id="GO:0032543">
    <property type="term" value="P:mitochondrial translation"/>
    <property type="evidence" value="ECO:0007669"/>
    <property type="project" value="TreeGrafter"/>
</dbReference>
<dbReference type="CDD" id="cd01433">
    <property type="entry name" value="Ribosomal_L16_L10e"/>
    <property type="match status" value="1"/>
</dbReference>
<dbReference type="FunFam" id="3.90.1170.10:FF:000001">
    <property type="entry name" value="50S ribosomal protein L16"/>
    <property type="match status" value="1"/>
</dbReference>
<dbReference type="Gene3D" id="3.90.1170.10">
    <property type="entry name" value="Ribosomal protein L10e/L16"/>
    <property type="match status" value="1"/>
</dbReference>
<dbReference type="HAMAP" id="MF_01342">
    <property type="entry name" value="Ribosomal_uL16"/>
    <property type="match status" value="1"/>
</dbReference>
<dbReference type="InterPro" id="IPR047873">
    <property type="entry name" value="Ribosomal_uL16"/>
</dbReference>
<dbReference type="InterPro" id="IPR000114">
    <property type="entry name" value="Ribosomal_uL16_bact-type"/>
</dbReference>
<dbReference type="InterPro" id="IPR020798">
    <property type="entry name" value="Ribosomal_uL16_CS"/>
</dbReference>
<dbReference type="InterPro" id="IPR016180">
    <property type="entry name" value="Ribosomal_uL16_dom"/>
</dbReference>
<dbReference type="InterPro" id="IPR036920">
    <property type="entry name" value="Ribosomal_uL16_sf"/>
</dbReference>
<dbReference type="NCBIfam" id="TIGR01164">
    <property type="entry name" value="rplP_bact"/>
    <property type="match status" value="1"/>
</dbReference>
<dbReference type="PANTHER" id="PTHR12220">
    <property type="entry name" value="50S/60S RIBOSOMAL PROTEIN L16"/>
    <property type="match status" value="1"/>
</dbReference>
<dbReference type="PANTHER" id="PTHR12220:SF13">
    <property type="entry name" value="LARGE RIBOSOMAL SUBUNIT PROTEIN UL16M"/>
    <property type="match status" value="1"/>
</dbReference>
<dbReference type="Pfam" id="PF00252">
    <property type="entry name" value="Ribosomal_L16"/>
    <property type="match status" value="1"/>
</dbReference>
<dbReference type="PRINTS" id="PR00060">
    <property type="entry name" value="RIBOSOMALL16"/>
</dbReference>
<dbReference type="SUPFAM" id="SSF54686">
    <property type="entry name" value="Ribosomal protein L16p/L10e"/>
    <property type="match status" value="1"/>
</dbReference>
<dbReference type="PROSITE" id="PS00586">
    <property type="entry name" value="RIBOSOMAL_L16_1"/>
    <property type="match status" value="1"/>
</dbReference>
<dbReference type="PROSITE" id="PS00701">
    <property type="entry name" value="RIBOSOMAL_L16_2"/>
    <property type="match status" value="1"/>
</dbReference>
<keyword id="KW-0150">Chloroplast</keyword>
<keyword id="KW-0934">Plastid</keyword>
<keyword id="KW-0687">Ribonucleoprotein</keyword>
<keyword id="KW-0689">Ribosomal protein</keyword>
<gene>
    <name evidence="1" type="primary">rpl16</name>
</gene>
<name>RK16_LOTJA</name>
<proteinExistence type="inferred from homology"/>
<sequence>MLSPKRTRFRKQHRGRMKGISHRGNQICFGRYALQALEPAWITSRQIEAGRRAMSRNVRRGGQIWVRIFPDKPVTVRPTETRMGSGKGSPEYWVAVVKPGKIVYEMGGVAENIARKAISIAASKMPIRTQFIISG</sequence>
<protein>
    <recommendedName>
        <fullName evidence="1">Large ribosomal subunit protein uL16c</fullName>
    </recommendedName>
    <alternativeName>
        <fullName evidence="2">50S ribosomal protein L16, chloroplastic</fullName>
    </alternativeName>
</protein>
<evidence type="ECO:0000255" key="1">
    <source>
        <dbReference type="HAMAP-Rule" id="MF_01342"/>
    </source>
</evidence>
<evidence type="ECO:0000305" key="2"/>
<accession>Q9BBP9</accession>